<protein>
    <recommendedName>
        <fullName evidence="1">Histidinol-phosphate aminotransferase</fullName>
        <ecNumber evidence="1">2.6.1.9</ecNumber>
    </recommendedName>
    <alternativeName>
        <fullName evidence="1">Imidazole acetol-phosphate transaminase</fullName>
    </alternativeName>
</protein>
<accession>A3Q130</accession>
<name>HIS8_MYCSJ</name>
<keyword id="KW-0028">Amino-acid biosynthesis</keyword>
<keyword id="KW-0032">Aminotransferase</keyword>
<keyword id="KW-0368">Histidine biosynthesis</keyword>
<keyword id="KW-0663">Pyridoxal phosphate</keyword>
<keyword id="KW-0808">Transferase</keyword>
<organism>
    <name type="scientific">Mycobacterium sp. (strain JLS)</name>
    <dbReference type="NCBI Taxonomy" id="164757"/>
    <lineage>
        <taxon>Bacteria</taxon>
        <taxon>Bacillati</taxon>
        <taxon>Actinomycetota</taxon>
        <taxon>Actinomycetes</taxon>
        <taxon>Mycobacteriales</taxon>
        <taxon>Mycobacteriaceae</taxon>
        <taxon>Mycobacterium</taxon>
    </lineage>
</organism>
<reference key="1">
    <citation type="submission" date="2007-02" db="EMBL/GenBank/DDBJ databases">
        <title>Complete sequence of Mycobacterium sp. JLS.</title>
        <authorList>
            <consortium name="US DOE Joint Genome Institute"/>
            <person name="Copeland A."/>
            <person name="Lucas S."/>
            <person name="Lapidus A."/>
            <person name="Barry K."/>
            <person name="Detter J.C."/>
            <person name="Glavina del Rio T."/>
            <person name="Hammon N."/>
            <person name="Israni S."/>
            <person name="Dalin E."/>
            <person name="Tice H."/>
            <person name="Pitluck S."/>
            <person name="Chain P."/>
            <person name="Malfatti S."/>
            <person name="Shin M."/>
            <person name="Vergez L."/>
            <person name="Schmutz J."/>
            <person name="Larimer F."/>
            <person name="Land M."/>
            <person name="Hauser L."/>
            <person name="Kyrpides N."/>
            <person name="Mikhailova N."/>
            <person name="Miller C.D."/>
            <person name="Anderson A.J."/>
            <person name="Sims R.C."/>
            <person name="Richardson P."/>
        </authorList>
    </citation>
    <scope>NUCLEOTIDE SEQUENCE [LARGE SCALE GENOMIC DNA]</scope>
    <source>
        <strain>JLS</strain>
    </source>
</reference>
<gene>
    <name evidence="1" type="primary">hisC</name>
    <name type="ordered locus">Mjls_3078</name>
</gene>
<sequence length="377" mass="40682">MTVGERITLADLPLRDDLRGKSPYGAPQLQVPVRLNTNENPHPPSQALVDDVTRSVGEAAAELHRYPDRDAVALRSDLADYLNLRTGVELSVENLWAANGSNEVLQQLLQAFGGPGRSAIGFVPSYSMHPIIADATRTEWLQALRADDFGLDVDTAVREIAARRPDLVFVTSPNNPSGQSVPLEDLRRLLDAMETGILILDEAYGEFSSQPSGVALIDQYPTKLVVSRTMSKAFAFAGGRLGYLVAAPAVIEAMLLVRLPYHLSSLTQAAARAALRHADDTLASVATLIAERDRVANSLSQLGFRVVPSDANFILFGEFADAPATWRRYLDQGVLIRDVGIPGYLRTTIGLAEENDALLTASARLVETELAATLGAS</sequence>
<evidence type="ECO:0000255" key="1">
    <source>
        <dbReference type="HAMAP-Rule" id="MF_01023"/>
    </source>
</evidence>
<proteinExistence type="inferred from homology"/>
<comment type="catalytic activity">
    <reaction evidence="1">
        <text>L-histidinol phosphate + 2-oxoglutarate = 3-(imidazol-4-yl)-2-oxopropyl phosphate + L-glutamate</text>
        <dbReference type="Rhea" id="RHEA:23744"/>
        <dbReference type="ChEBI" id="CHEBI:16810"/>
        <dbReference type="ChEBI" id="CHEBI:29985"/>
        <dbReference type="ChEBI" id="CHEBI:57766"/>
        <dbReference type="ChEBI" id="CHEBI:57980"/>
        <dbReference type="EC" id="2.6.1.9"/>
    </reaction>
</comment>
<comment type="cofactor">
    <cofactor evidence="1">
        <name>pyridoxal 5'-phosphate</name>
        <dbReference type="ChEBI" id="CHEBI:597326"/>
    </cofactor>
</comment>
<comment type="pathway">
    <text evidence="1">Amino-acid biosynthesis; L-histidine biosynthesis; L-histidine from 5-phospho-alpha-D-ribose 1-diphosphate: step 7/9.</text>
</comment>
<comment type="subunit">
    <text evidence="1">Homodimer.</text>
</comment>
<comment type="similarity">
    <text evidence="1">Belongs to the class-II pyridoxal-phosphate-dependent aminotransferase family. Histidinol-phosphate aminotransferase subfamily.</text>
</comment>
<dbReference type="EC" id="2.6.1.9" evidence="1"/>
<dbReference type="EMBL" id="CP000580">
    <property type="protein sequence ID" value="ABN98857.1"/>
    <property type="molecule type" value="Genomic_DNA"/>
</dbReference>
<dbReference type="SMR" id="A3Q130"/>
<dbReference type="KEGG" id="mjl:Mjls_3078"/>
<dbReference type="HOGENOM" id="CLU_017584_3_1_11"/>
<dbReference type="BioCyc" id="MSP164757:G1G8C-3103-MONOMER"/>
<dbReference type="UniPathway" id="UPA00031">
    <property type="reaction ID" value="UER00012"/>
</dbReference>
<dbReference type="GO" id="GO:0004400">
    <property type="term" value="F:histidinol-phosphate transaminase activity"/>
    <property type="evidence" value="ECO:0007669"/>
    <property type="project" value="UniProtKB-UniRule"/>
</dbReference>
<dbReference type="GO" id="GO:0030170">
    <property type="term" value="F:pyridoxal phosphate binding"/>
    <property type="evidence" value="ECO:0007669"/>
    <property type="project" value="InterPro"/>
</dbReference>
<dbReference type="GO" id="GO:0000105">
    <property type="term" value="P:L-histidine biosynthetic process"/>
    <property type="evidence" value="ECO:0007669"/>
    <property type="project" value="UniProtKB-UniRule"/>
</dbReference>
<dbReference type="CDD" id="cd00609">
    <property type="entry name" value="AAT_like"/>
    <property type="match status" value="1"/>
</dbReference>
<dbReference type="Gene3D" id="3.90.1150.10">
    <property type="entry name" value="Aspartate Aminotransferase, domain 1"/>
    <property type="match status" value="1"/>
</dbReference>
<dbReference type="Gene3D" id="3.40.640.10">
    <property type="entry name" value="Type I PLP-dependent aspartate aminotransferase-like (Major domain)"/>
    <property type="match status" value="1"/>
</dbReference>
<dbReference type="HAMAP" id="MF_01023">
    <property type="entry name" value="HisC_aminotrans_2"/>
    <property type="match status" value="1"/>
</dbReference>
<dbReference type="InterPro" id="IPR001917">
    <property type="entry name" value="Aminotrans_II_pyridoxalP_BS"/>
</dbReference>
<dbReference type="InterPro" id="IPR004839">
    <property type="entry name" value="Aminotransferase_I/II_large"/>
</dbReference>
<dbReference type="InterPro" id="IPR005861">
    <property type="entry name" value="HisP_aminotrans"/>
</dbReference>
<dbReference type="InterPro" id="IPR015424">
    <property type="entry name" value="PyrdxlP-dep_Trfase"/>
</dbReference>
<dbReference type="InterPro" id="IPR015421">
    <property type="entry name" value="PyrdxlP-dep_Trfase_major"/>
</dbReference>
<dbReference type="InterPro" id="IPR015422">
    <property type="entry name" value="PyrdxlP-dep_Trfase_small"/>
</dbReference>
<dbReference type="NCBIfam" id="TIGR01141">
    <property type="entry name" value="hisC"/>
    <property type="match status" value="1"/>
</dbReference>
<dbReference type="NCBIfam" id="NF002877">
    <property type="entry name" value="PRK03317.1"/>
    <property type="match status" value="1"/>
</dbReference>
<dbReference type="PANTHER" id="PTHR42885:SF2">
    <property type="entry name" value="HISTIDINOL-PHOSPHATE AMINOTRANSFERASE"/>
    <property type="match status" value="1"/>
</dbReference>
<dbReference type="PANTHER" id="PTHR42885">
    <property type="entry name" value="HISTIDINOL-PHOSPHATE AMINOTRANSFERASE-RELATED"/>
    <property type="match status" value="1"/>
</dbReference>
<dbReference type="Pfam" id="PF00155">
    <property type="entry name" value="Aminotran_1_2"/>
    <property type="match status" value="1"/>
</dbReference>
<dbReference type="SUPFAM" id="SSF53383">
    <property type="entry name" value="PLP-dependent transferases"/>
    <property type="match status" value="1"/>
</dbReference>
<dbReference type="PROSITE" id="PS00599">
    <property type="entry name" value="AA_TRANSFER_CLASS_2"/>
    <property type="match status" value="1"/>
</dbReference>
<feature type="chain" id="PRO_0000319776" description="Histidinol-phosphate aminotransferase">
    <location>
        <begin position="1"/>
        <end position="377"/>
    </location>
</feature>
<feature type="modified residue" description="N6-(pyridoxal phosphate)lysine" evidence="1">
    <location>
        <position position="232"/>
    </location>
</feature>